<accession>P34061</accession>
<gene>
    <name type="primary">MYF5</name>
    <name type="synonym">MF3</name>
</gene>
<sequence>RVRARIPGLSSPEGEFPEDFEPRELPPFGAPAPTEPACPEEEEHIRAPSGHHQAGHCLMWACKACKRKSTTMDRRKAATMRERRRLKKVNQAFETLKRCTTANPNQRLPKVEILRNAIRYIESLQELLREQVENYYHLPGQSCSEPTSPSSSCSDAMGRTAAGPVWPARGSSFEAGYCPEMPHAYATEQSGALSSLDCLSRIVDRLSPAEEPGLPLRHAGSLSPGASIDSGARTPGSPPPRTYQAL</sequence>
<name>MYF5_COTJA</name>
<evidence type="ECO:0000250" key="1"/>
<evidence type="ECO:0000255" key="2">
    <source>
        <dbReference type="PROSITE-ProRule" id="PRU00981"/>
    </source>
</evidence>
<evidence type="ECO:0000256" key="3">
    <source>
        <dbReference type="SAM" id="MobiDB-lite"/>
    </source>
</evidence>
<organism>
    <name type="scientific">Coturnix japonica</name>
    <name type="common">Japanese quail</name>
    <name type="synonym">Coturnix coturnix japonica</name>
    <dbReference type="NCBI Taxonomy" id="93934"/>
    <lineage>
        <taxon>Eukaryota</taxon>
        <taxon>Metazoa</taxon>
        <taxon>Chordata</taxon>
        <taxon>Craniata</taxon>
        <taxon>Vertebrata</taxon>
        <taxon>Euteleostomi</taxon>
        <taxon>Archelosauria</taxon>
        <taxon>Archosauria</taxon>
        <taxon>Dinosauria</taxon>
        <taxon>Saurischia</taxon>
        <taxon>Theropoda</taxon>
        <taxon>Coelurosauria</taxon>
        <taxon>Aves</taxon>
        <taxon>Neognathae</taxon>
        <taxon>Galloanserae</taxon>
        <taxon>Galliformes</taxon>
        <taxon>Phasianidae</taxon>
        <taxon>Perdicinae</taxon>
        <taxon>Coturnix</taxon>
    </lineage>
</organism>
<dbReference type="EMBL" id="L15472">
    <property type="protein sequence ID" value="AAA49497.1"/>
    <property type="status" value="ALT_TERM"/>
    <property type="molecule type" value="mRNA"/>
</dbReference>
<dbReference type="PIR" id="B43912">
    <property type="entry name" value="B43912"/>
</dbReference>
<dbReference type="SMR" id="P34061"/>
<dbReference type="Proteomes" id="UP000694412">
    <property type="component" value="Unplaced"/>
</dbReference>
<dbReference type="GO" id="GO:0005634">
    <property type="term" value="C:nucleus"/>
    <property type="evidence" value="ECO:0007669"/>
    <property type="project" value="UniProtKB-SubCell"/>
</dbReference>
<dbReference type="GO" id="GO:0000981">
    <property type="term" value="F:DNA-binding transcription factor activity, RNA polymerase II-specific"/>
    <property type="evidence" value="ECO:0007669"/>
    <property type="project" value="TreeGrafter"/>
</dbReference>
<dbReference type="GO" id="GO:0046983">
    <property type="term" value="F:protein dimerization activity"/>
    <property type="evidence" value="ECO:0007669"/>
    <property type="project" value="InterPro"/>
</dbReference>
<dbReference type="GO" id="GO:0000978">
    <property type="term" value="F:RNA polymerase II cis-regulatory region sequence-specific DNA binding"/>
    <property type="evidence" value="ECO:0007669"/>
    <property type="project" value="TreeGrafter"/>
</dbReference>
<dbReference type="GO" id="GO:0045663">
    <property type="term" value="P:positive regulation of myoblast differentiation"/>
    <property type="evidence" value="ECO:0007669"/>
    <property type="project" value="TreeGrafter"/>
</dbReference>
<dbReference type="GO" id="GO:0048743">
    <property type="term" value="P:positive regulation of skeletal muscle fiber development"/>
    <property type="evidence" value="ECO:0007669"/>
    <property type="project" value="TreeGrafter"/>
</dbReference>
<dbReference type="GO" id="GO:0035914">
    <property type="term" value="P:skeletal muscle cell differentiation"/>
    <property type="evidence" value="ECO:0007669"/>
    <property type="project" value="TreeGrafter"/>
</dbReference>
<dbReference type="FunFam" id="4.10.280.10:FF:000005">
    <property type="entry name" value="Myogenic factor"/>
    <property type="match status" value="1"/>
</dbReference>
<dbReference type="Gene3D" id="4.10.280.10">
    <property type="entry name" value="Helix-loop-helix DNA-binding domain"/>
    <property type="match status" value="1"/>
</dbReference>
<dbReference type="InterPro" id="IPR011598">
    <property type="entry name" value="bHLH_dom"/>
</dbReference>
<dbReference type="InterPro" id="IPR036638">
    <property type="entry name" value="HLH_DNA-bd_sf"/>
</dbReference>
<dbReference type="InterPro" id="IPR022032">
    <property type="entry name" value="Myf5"/>
</dbReference>
<dbReference type="InterPro" id="IPR002546">
    <property type="entry name" value="MyoD_N"/>
</dbReference>
<dbReference type="InterPro" id="IPR039704">
    <property type="entry name" value="Myogenic_factor"/>
</dbReference>
<dbReference type="PANTHER" id="PTHR11534">
    <property type="entry name" value="MYOGENIC FACTOR"/>
    <property type="match status" value="1"/>
</dbReference>
<dbReference type="PANTHER" id="PTHR11534:SF3">
    <property type="entry name" value="MYOGENIC FACTOR 5"/>
    <property type="match status" value="1"/>
</dbReference>
<dbReference type="Pfam" id="PF01586">
    <property type="entry name" value="Basic"/>
    <property type="match status" value="1"/>
</dbReference>
<dbReference type="Pfam" id="PF00010">
    <property type="entry name" value="HLH"/>
    <property type="match status" value="1"/>
</dbReference>
<dbReference type="Pfam" id="PF12232">
    <property type="entry name" value="Myf5"/>
    <property type="match status" value="1"/>
</dbReference>
<dbReference type="SMART" id="SM00520">
    <property type="entry name" value="BASIC"/>
    <property type="match status" value="1"/>
</dbReference>
<dbReference type="SMART" id="SM00353">
    <property type="entry name" value="HLH"/>
    <property type="match status" value="1"/>
</dbReference>
<dbReference type="SUPFAM" id="SSF47459">
    <property type="entry name" value="HLH, helix-loop-helix DNA-binding domain"/>
    <property type="match status" value="1"/>
</dbReference>
<dbReference type="PROSITE" id="PS50888">
    <property type="entry name" value="BHLH"/>
    <property type="match status" value="1"/>
</dbReference>
<proteinExistence type="evidence at transcript level"/>
<protein>
    <recommendedName>
        <fullName>Myogenic factor 5</fullName>
        <shortName>Myf-5</shortName>
    </recommendedName>
    <alternativeName>
        <fullName>Myogenic factor 3</fullName>
    </alternativeName>
</protein>
<keyword id="KW-0010">Activator</keyword>
<keyword id="KW-0217">Developmental protein</keyword>
<keyword id="KW-0221">Differentiation</keyword>
<keyword id="KW-0238">DNA-binding</keyword>
<keyword id="KW-0517">Myogenesis</keyword>
<keyword id="KW-0539">Nucleus</keyword>
<keyword id="KW-1185">Reference proteome</keyword>
<keyword id="KW-0804">Transcription</keyword>
<keyword id="KW-0805">Transcription regulation</keyword>
<comment type="function">
    <text evidence="1">Acts as a transcriptional activator that promotes transcription of muscle-specific target genes and plays a role in muscle differentiation. Induces fibroblasts to differentiate into myoblasts. Probable sequence specific DNA-binding protein (By similarity).</text>
</comment>
<comment type="subunit">
    <text>Efficient DNA binding requires dimerization with another bHLH protein.</text>
</comment>
<comment type="subcellular location">
    <subcellularLocation>
        <location evidence="2">Nucleus</location>
    </subcellularLocation>
</comment>
<reference key="1">
    <citation type="journal article" date="1992" name="Dev. Biol.">
        <title>Sequential activation of three myogenic regulatory genes during somite morphogenesis in quail embryos.</title>
        <authorList>
            <person name="Pownall M.E."/>
            <person name="Emerson C.P. Jr."/>
        </authorList>
    </citation>
    <scope>NUCLEOTIDE SEQUENCE [MRNA]</scope>
    <source>
        <tissue>Muscle</tissue>
    </source>
</reference>
<feature type="chain" id="PRO_0000127347" description="Myogenic factor 5">
    <location>
        <begin position="1" status="less than"/>
        <end position="246"/>
    </location>
</feature>
<feature type="domain" description="bHLH" evidence="2">
    <location>
        <begin position="73"/>
        <end position="124"/>
    </location>
</feature>
<feature type="region of interest" description="Disordered" evidence="3">
    <location>
        <begin position="1"/>
        <end position="38"/>
    </location>
</feature>
<feature type="region of interest" description="Disordered" evidence="3">
    <location>
        <begin position="210"/>
        <end position="246"/>
    </location>
</feature>
<feature type="compositionally biased region" description="Pro residues" evidence="3">
    <location>
        <begin position="236"/>
        <end position="246"/>
    </location>
</feature>
<feature type="non-terminal residue">
    <location>
        <position position="1"/>
    </location>
</feature>